<reference key="1">
    <citation type="journal article" date="2002" name="Mol. Microbiol.">
        <title>Specific activation of the Bacillus quorum-sensing systems by isoprenylated pheromone variants.</title>
        <authorList>
            <person name="Ansaldi M."/>
            <person name="Marolt D."/>
            <person name="Stebe T."/>
            <person name="Mandic-Mulec I."/>
            <person name="Dubnau D."/>
        </authorList>
    </citation>
    <scope>NUCLEOTIDE SEQUENCE [GENOMIC DNA]</scope>
    <scope>FUNCTION</scope>
    <scope>ISOPRENYLATION AT TRP-56</scope>
    <scope>IDENTIFICATION BY MASS SPECTROMETRY</scope>
    <source>
        <strain>DV3-D-2 / NRRL B-23063</strain>
        <strain>RO-E-2 / NRRL B-23055</strain>
    </source>
</reference>
<reference key="2">
    <citation type="submission" date="2005-10" db="EMBL/GenBank/DDBJ databases">
        <title>Variability of Bacillus sp. quorum sensing system.</title>
        <authorList>
            <person name="Sabotic J."/>
            <person name="Cepon U."/>
            <person name="Cadez P."/>
            <person name="Mandic Mulec I."/>
        </authorList>
    </citation>
    <scope>NUCLEOTIDE SEQUENCE [GENOMIC DNA]</scope>
    <source>
        <strain>DV3-D-2 / NRRL B-23063</strain>
    </source>
</reference>
<reference key="3">
    <citation type="journal article" date="2001" name="J. Bacteriol.">
        <title>Specificity and genetic polymorphism of the Bacillus competence quorum-sensing system.</title>
        <authorList>
            <person name="Tortosa P."/>
            <person name="Logsdon L."/>
            <person name="Kraigher B."/>
            <person name="Itoh Y."/>
            <person name="Mandic-Mulec I."/>
            <person name="Dubnau D."/>
        </authorList>
    </citation>
    <scope>POLYMORPHISM IN COMX; COMQ AND COMP</scope>
</reference>
<reference key="4">
    <citation type="journal article" date="2004" name="J. Bacteriol.">
        <title>Diversifying selection at the Bacillus quorum-sensing locus and determinants of modification specificity during synthesis of the ComX pheromone.</title>
        <authorList>
            <person name="Ansaldi M."/>
            <person name="Dubnau D."/>
        </authorList>
    </citation>
    <scope>POLYMORPHISM</scope>
    <scope>DETERMINANTS OF MODIFICATION SPECIFICITY</scope>
</reference>
<reference key="5">
    <citation type="journal article" date="2005" name="Nat. Chem. Biol.">
        <title>Structure of the Bacillus subtilis quorum-sensing peptide pheromone ComX.</title>
        <authorList>
            <person name="Okada M."/>
            <person name="Sato I."/>
            <person name="Cho S.J."/>
            <person name="Iwata H."/>
            <person name="Nishio T."/>
            <person name="Dubnau D."/>
            <person name="Sakagami Y."/>
        </authorList>
    </citation>
    <scope>GERANYLATION AT TRP-56</scope>
    <source>
        <strain>RO-E-2 / NRRL B-23055</strain>
    </source>
</reference>
<reference key="6">
    <citation type="journal article" date="2012" name="FEBS Lett.">
        <title>Geranyl modification on the tryptophan residue of ComXRO-E-2 pheromone by a cell-free system.</title>
        <authorList>
            <person name="Tsuji F."/>
            <person name="Ishihara A."/>
            <person name="Kurata K."/>
            <person name="Nakagawa A."/>
            <person name="Okada M."/>
            <person name="Kitamura S."/>
            <person name="Kanamaru K."/>
            <person name="Masuda Y."/>
            <person name="Murakami K."/>
            <person name="Irie K."/>
            <person name="Sakagami Y."/>
        </authorList>
    </citation>
    <scope>GERANYLATION AT TRP-56 BY COMQ</scope>
    <source>
        <strain>RO-E-2 / NRRL B-23055</strain>
    </source>
</reference>
<accession>P0CY51</accession>
<accession>Q8VL79</accession>
<organism>
    <name type="scientific">Bacillus spizizenii</name>
    <name type="common">Bacillus subtilis subsp. spizizenii</name>
    <dbReference type="NCBI Taxonomy" id="96241"/>
    <lineage>
        <taxon>Bacteria</taxon>
        <taxon>Bacillati</taxon>
        <taxon>Bacillota</taxon>
        <taxon>Bacilli</taxon>
        <taxon>Bacillales</taxon>
        <taxon>Bacillaceae</taxon>
        <taxon>Bacillus</taxon>
    </lineage>
</organism>
<name>COMX_BACSC</name>
<proteinExistence type="evidence at protein level"/>
<dbReference type="EMBL" id="AF456138">
    <property type="protein sequence ID" value="AAL67740.1"/>
    <property type="molecule type" value="Genomic_DNA"/>
</dbReference>
<dbReference type="EMBL" id="AF458695">
    <property type="protein sequence ID" value="AAL59650.1"/>
    <property type="molecule type" value="Genomic_DNA"/>
</dbReference>
<dbReference type="EMBL" id="DQ241785">
    <property type="protein sequence ID" value="ABB51994.1"/>
    <property type="molecule type" value="Genomic_DNA"/>
</dbReference>
<dbReference type="RefSeq" id="WP_041906074.1">
    <property type="nucleotide sequence ID" value="NZ_JARSKV010000006.1"/>
</dbReference>
<dbReference type="SMR" id="P0CY51"/>
<dbReference type="GO" id="GO:0005576">
    <property type="term" value="C:extracellular region"/>
    <property type="evidence" value="ECO:0007669"/>
    <property type="project" value="UniProtKB-SubCell"/>
</dbReference>
<dbReference type="GO" id="GO:0005186">
    <property type="term" value="F:pheromone activity"/>
    <property type="evidence" value="ECO:0007669"/>
    <property type="project" value="UniProtKB-KW"/>
</dbReference>
<dbReference type="GO" id="GO:0030420">
    <property type="term" value="P:establishment of competence for transformation"/>
    <property type="evidence" value="ECO:0007669"/>
    <property type="project" value="UniProtKB-KW"/>
</dbReference>
<dbReference type="InterPro" id="IPR009233">
    <property type="entry name" value="Competence_ComX_Bacillus"/>
</dbReference>
<dbReference type="Pfam" id="PF05952">
    <property type="entry name" value="ComX"/>
    <property type="match status" value="1"/>
</dbReference>
<comment type="function">
    <text evidence="1 3">Part of a major quorum-sensing system that regulates the development of genetic competence (PubMed:12067344). Acts through the activation of the two-component regulatory system ComP/ComA composed of a sensor histidine kinase, ComP, and a response regulator, ComA (By similarity).</text>
</comment>
<comment type="subunit">
    <text evidence="1">Interacts directly with the sensor histidine kinase ComP and stimulates its activity.</text>
</comment>
<comment type="subcellular location">
    <subcellularLocation>
        <location evidence="1">Secreted</location>
    </subcellularLocation>
</comment>
<comment type="PTM">
    <text evidence="3 4 5 6">Trp-56 is modified by geranylation, which is essential for activity (PubMed:12067344, PubMed:16407988, PubMed:22197102). Modified by the tryptophan prenyltransferase ComQ before export to the extracellular environment (PubMed:22197102). The type of isoprenyl derivative differs among the different pherotypes and depends on ComX primary sequence (PubMed:12067344, PubMed:14679219).</text>
</comment>
<comment type="miscellaneous">
    <text evidence="2">The DNA sequences encoding ComQ, ComX and the N-terminal two-thirds of ComP show a striking polymorphism, which determines the specificity of the quorum-sensing system in the different pherotypes of Bacillus. In ComX, the sole conserved residue is the modified tryptophan essential for the activity.</text>
</comment>
<gene>
    <name evidence="7" type="primary">comX</name>
</gene>
<feature type="propeptide" id="PRO_0000409887">
    <location>
        <begin position="1"/>
        <end position="52"/>
    </location>
</feature>
<feature type="peptide" id="PRO_0000409888" description="ComX pheromone">
    <location>
        <begin position="53"/>
        <end position="58"/>
    </location>
</feature>
<feature type="lipid moiety-binding region" description="3'-geranyl-2',N2-cyclotryptophan; in strain RO-E-2 /NRRL B-23055" evidence="5 6">
    <location>
        <position position="56"/>
    </location>
</feature>
<evidence type="ECO:0000250" key="1">
    <source>
        <dbReference type="UniProtKB" id="P45453"/>
    </source>
</evidence>
<evidence type="ECO:0000269" key="2">
    <source>
    </source>
</evidence>
<evidence type="ECO:0000269" key="3">
    <source>
    </source>
</evidence>
<evidence type="ECO:0000269" key="4">
    <source>
    </source>
</evidence>
<evidence type="ECO:0000269" key="5">
    <source>
    </source>
</evidence>
<evidence type="ECO:0000269" key="6">
    <source>
    </source>
</evidence>
<evidence type="ECO:0000303" key="7">
    <source>
    </source>
</evidence>
<evidence type="ECO:0000303" key="8">
    <source>
    </source>
</evidence>
<evidence type="ECO:0000305" key="9"/>
<keyword id="KW-0178">Competence</keyword>
<keyword id="KW-0449">Lipoprotein</keyword>
<keyword id="KW-0588">Pheromone</keyword>
<keyword id="KW-0636">Prenylation</keyword>
<keyword id="KW-0964">Secreted</keyword>
<protein>
    <recommendedName>
        <fullName evidence="8">ComX pheromone</fullName>
    </recommendedName>
    <alternativeName>
        <fullName evidence="9">Competence pheromone</fullName>
    </alternativeName>
</protein>
<sequence length="58" mass="6684">MKQDMIDYLMKNPQVLTKLENGEASLIGIPDKLIPSIVDIFNKKMTLSKKCKGIFWEQ</sequence>